<organism>
    <name type="scientific">Shouchella clausii (strain KSM-K16)</name>
    <name type="common">Alkalihalobacillus clausii</name>
    <dbReference type="NCBI Taxonomy" id="66692"/>
    <lineage>
        <taxon>Bacteria</taxon>
        <taxon>Bacillati</taxon>
        <taxon>Bacillota</taxon>
        <taxon>Bacilli</taxon>
        <taxon>Bacillales</taxon>
        <taxon>Bacillaceae</taxon>
        <taxon>Shouchella</taxon>
    </lineage>
</organism>
<accession>Q5WG37</accession>
<protein>
    <recommendedName>
        <fullName>Spore morphogenesis and germination protein YwcE</fullName>
    </recommendedName>
</protein>
<sequence>MDLFFAYMFVASATPLFLWLEHRKIALASIPFIIVMWVLALAHIFDGFLFDLHHSAFVTAFLINVFIAHFAALVLYVYPHLRSKSRRFTQSTE</sequence>
<proteinExistence type="inferred from homology"/>
<comment type="function">
    <text evidence="1">Required for proper spore morphogenesis. Important for spore germination (By similarity).</text>
</comment>
<comment type="subcellular location">
    <subcellularLocation>
        <location evidence="1">Spore membrane</location>
        <topology evidence="1">Multi-pass membrane protein</topology>
    </subcellularLocation>
    <subcellularLocation>
        <location evidence="1">Spore outer membrane</location>
        <topology evidence="1">Multi-pass membrane protein</topology>
    </subcellularLocation>
    <subcellularLocation>
        <location evidence="1">Cell membrane</location>
    </subcellularLocation>
</comment>
<comment type="similarity">
    <text evidence="3">Belongs to the YwcE family.</text>
</comment>
<keyword id="KW-1003">Cell membrane</keyword>
<keyword id="KW-0309">Germination</keyword>
<keyword id="KW-0472">Membrane</keyword>
<keyword id="KW-1185">Reference proteome</keyword>
<keyword id="KW-0812">Transmembrane</keyword>
<keyword id="KW-1133">Transmembrane helix</keyword>
<feature type="chain" id="PRO_0000049959" description="Spore morphogenesis and germination protein YwcE">
    <location>
        <begin position="1"/>
        <end position="93"/>
    </location>
</feature>
<feature type="transmembrane region" description="Helical" evidence="2">
    <location>
        <begin position="1"/>
        <end position="21"/>
    </location>
</feature>
<feature type="transmembrane region" description="Helical" evidence="2">
    <location>
        <begin position="25"/>
        <end position="45"/>
    </location>
</feature>
<feature type="transmembrane region" description="Helical" evidence="2">
    <location>
        <begin position="57"/>
        <end position="77"/>
    </location>
</feature>
<name>YWCE_SHOC1</name>
<evidence type="ECO:0000250" key="1"/>
<evidence type="ECO:0000255" key="2"/>
<evidence type="ECO:0000305" key="3"/>
<dbReference type="EMBL" id="AP006627">
    <property type="protein sequence ID" value="BAD64668.1"/>
    <property type="molecule type" value="Genomic_DNA"/>
</dbReference>
<dbReference type="RefSeq" id="WP_011246976.1">
    <property type="nucleotide sequence ID" value="NC_006582.1"/>
</dbReference>
<dbReference type="TCDB" id="1.E.23.1.2">
    <property type="family name" value="the bacillus spore morphogenesis and germination holin (bsh) family"/>
</dbReference>
<dbReference type="KEGG" id="bcl:ABC2133"/>
<dbReference type="eggNOG" id="ENOG5033HBX">
    <property type="taxonomic scope" value="Bacteria"/>
</dbReference>
<dbReference type="HOGENOM" id="CLU_2491159_0_0_9"/>
<dbReference type="OrthoDB" id="2680024at2"/>
<dbReference type="Proteomes" id="UP000001168">
    <property type="component" value="Chromosome"/>
</dbReference>
<dbReference type="GO" id="GO:0043594">
    <property type="term" value="C:outer endospore membrane"/>
    <property type="evidence" value="ECO:0007669"/>
    <property type="project" value="UniProtKB-SubCell"/>
</dbReference>
<dbReference type="GO" id="GO:0005886">
    <property type="term" value="C:plasma membrane"/>
    <property type="evidence" value="ECO:0007669"/>
    <property type="project" value="UniProtKB-SubCell"/>
</dbReference>
<dbReference type="InterPro" id="IPR020185">
    <property type="entry name" value="Spore_morphogenesis_YwcE"/>
</dbReference>
<dbReference type="Pfam" id="PF17368">
    <property type="entry name" value="YwcE"/>
    <property type="match status" value="1"/>
</dbReference>
<gene>
    <name type="primary">ywcE</name>
    <name type="ordered locus">ABC2133</name>
</gene>
<reference key="1">
    <citation type="submission" date="2003-10" db="EMBL/GenBank/DDBJ databases">
        <title>The complete genome sequence of the alkaliphilic Bacillus clausii KSM-K16.</title>
        <authorList>
            <person name="Takaki Y."/>
            <person name="Kageyama Y."/>
            <person name="Shimamura S."/>
            <person name="Suzuki H."/>
            <person name="Nishi S."/>
            <person name="Hatada Y."/>
            <person name="Kawai S."/>
            <person name="Ito S."/>
            <person name="Horikoshi K."/>
        </authorList>
    </citation>
    <scope>NUCLEOTIDE SEQUENCE [LARGE SCALE GENOMIC DNA]</scope>
    <source>
        <strain>KSM-K16</strain>
    </source>
</reference>